<reference key="1">
    <citation type="journal article" date="2007" name="BMC Genomics">
        <title>The chloroplast genome sequence of the green alga Leptosira terrestris: multiple losses of the inverted repeat and extensive genome rearrangements within the Trebouxiophyceae.</title>
        <authorList>
            <person name="de Cambiaire J.-C."/>
            <person name="Otis C."/>
            <person name="Turmel M."/>
            <person name="Lemieux C."/>
        </authorList>
    </citation>
    <scope>NUCLEOTIDE SEQUENCE [LARGE SCALE GENOMIC DNA]</scope>
    <source>
        <strain>CCAP 463/2 / UTEX 333</strain>
    </source>
</reference>
<dbReference type="EC" id="1.97.1.12" evidence="1"/>
<dbReference type="EMBL" id="EF506945">
    <property type="protein sequence ID" value="ABO69333.1"/>
    <property type="molecule type" value="Genomic_DNA"/>
</dbReference>
<dbReference type="RefSeq" id="YP_001382197.1">
    <property type="nucleotide sequence ID" value="NC_009681.1"/>
</dbReference>
<dbReference type="SMR" id="A6YGC0"/>
<dbReference type="GeneID" id="5383823"/>
<dbReference type="GO" id="GO:0009535">
    <property type="term" value="C:chloroplast thylakoid membrane"/>
    <property type="evidence" value="ECO:0007669"/>
    <property type="project" value="UniProtKB-SubCell"/>
</dbReference>
<dbReference type="GO" id="GO:0009522">
    <property type="term" value="C:photosystem I"/>
    <property type="evidence" value="ECO:0007669"/>
    <property type="project" value="UniProtKB-KW"/>
</dbReference>
<dbReference type="GO" id="GO:0051539">
    <property type="term" value="F:4 iron, 4 sulfur cluster binding"/>
    <property type="evidence" value="ECO:0007669"/>
    <property type="project" value="UniProtKB-KW"/>
</dbReference>
<dbReference type="GO" id="GO:0009055">
    <property type="term" value="F:electron transfer activity"/>
    <property type="evidence" value="ECO:0007669"/>
    <property type="project" value="UniProtKB-UniRule"/>
</dbReference>
<dbReference type="GO" id="GO:0046872">
    <property type="term" value="F:metal ion binding"/>
    <property type="evidence" value="ECO:0007669"/>
    <property type="project" value="UniProtKB-KW"/>
</dbReference>
<dbReference type="GO" id="GO:0016491">
    <property type="term" value="F:oxidoreductase activity"/>
    <property type="evidence" value="ECO:0007669"/>
    <property type="project" value="UniProtKB-KW"/>
</dbReference>
<dbReference type="GO" id="GO:0009773">
    <property type="term" value="P:photosynthetic electron transport in photosystem I"/>
    <property type="evidence" value="ECO:0007669"/>
    <property type="project" value="InterPro"/>
</dbReference>
<dbReference type="FunFam" id="3.30.70.20:FF:000001">
    <property type="entry name" value="Photosystem I iron-sulfur center"/>
    <property type="match status" value="1"/>
</dbReference>
<dbReference type="Gene3D" id="3.30.70.20">
    <property type="match status" value="1"/>
</dbReference>
<dbReference type="HAMAP" id="MF_01303">
    <property type="entry name" value="PSI_PsaC"/>
    <property type="match status" value="1"/>
</dbReference>
<dbReference type="InterPro" id="IPR017896">
    <property type="entry name" value="4Fe4S_Fe-S-bd"/>
</dbReference>
<dbReference type="InterPro" id="IPR017900">
    <property type="entry name" value="4Fe4S_Fe_S_CS"/>
</dbReference>
<dbReference type="InterPro" id="IPR050157">
    <property type="entry name" value="PSI_iron-sulfur_center"/>
</dbReference>
<dbReference type="InterPro" id="IPR017491">
    <property type="entry name" value="PSI_PsaC"/>
</dbReference>
<dbReference type="NCBIfam" id="TIGR03048">
    <property type="entry name" value="PS_I_psaC"/>
    <property type="match status" value="1"/>
</dbReference>
<dbReference type="PANTHER" id="PTHR24960:SF79">
    <property type="entry name" value="PHOTOSYSTEM I IRON-SULFUR CENTER"/>
    <property type="match status" value="1"/>
</dbReference>
<dbReference type="PANTHER" id="PTHR24960">
    <property type="entry name" value="PHOTOSYSTEM I IRON-SULFUR CENTER-RELATED"/>
    <property type="match status" value="1"/>
</dbReference>
<dbReference type="Pfam" id="PF12838">
    <property type="entry name" value="Fer4_7"/>
    <property type="match status" value="1"/>
</dbReference>
<dbReference type="SUPFAM" id="SSF54862">
    <property type="entry name" value="4Fe-4S ferredoxins"/>
    <property type="match status" value="1"/>
</dbReference>
<dbReference type="PROSITE" id="PS00198">
    <property type="entry name" value="4FE4S_FER_1"/>
    <property type="match status" value="2"/>
</dbReference>
<dbReference type="PROSITE" id="PS51379">
    <property type="entry name" value="4FE4S_FER_2"/>
    <property type="match status" value="2"/>
</dbReference>
<name>PSAC_PLETE</name>
<comment type="function">
    <text evidence="1">Apoprotein for the two 4Fe-4S centers FA and FB of photosystem I (PSI); essential for photochemical activity. FB is the terminal electron acceptor of PSI, donating electrons to ferredoxin. The C-terminus interacts with PsaA/B/D and helps assemble the protein into the PSI complex. Required for binding of PsaD and PsaE to PSI. PSI is a plastocyanin/cytochrome c6-ferredoxin oxidoreductase, converting photonic excitation into a charge separation, which transfers an electron from the donor P700 chlorophyll pair to the spectroscopically characterized acceptors A0, A1, FX, FA and FB in turn.</text>
</comment>
<comment type="catalytic activity">
    <reaction evidence="1">
        <text>reduced [plastocyanin] + hnu + oxidized [2Fe-2S]-[ferredoxin] = oxidized [plastocyanin] + reduced [2Fe-2S]-[ferredoxin]</text>
        <dbReference type="Rhea" id="RHEA:30407"/>
        <dbReference type="Rhea" id="RHEA-COMP:10000"/>
        <dbReference type="Rhea" id="RHEA-COMP:10001"/>
        <dbReference type="Rhea" id="RHEA-COMP:10039"/>
        <dbReference type="Rhea" id="RHEA-COMP:10040"/>
        <dbReference type="ChEBI" id="CHEBI:29036"/>
        <dbReference type="ChEBI" id="CHEBI:30212"/>
        <dbReference type="ChEBI" id="CHEBI:33737"/>
        <dbReference type="ChEBI" id="CHEBI:33738"/>
        <dbReference type="ChEBI" id="CHEBI:49552"/>
        <dbReference type="EC" id="1.97.1.12"/>
    </reaction>
</comment>
<comment type="cofactor">
    <cofactor evidence="1">
        <name>[4Fe-4S] cluster</name>
        <dbReference type="ChEBI" id="CHEBI:49883"/>
    </cofactor>
    <text evidence="1">Binds 2 [4Fe-4S] clusters. Cluster 2 is most probably the spectroscopically characterized electron acceptor FA and cluster 1 is most probably FB.</text>
</comment>
<comment type="subunit">
    <text evidence="1">The eukaryotic PSI reaction center is composed of at least 11 subunits.</text>
</comment>
<comment type="subcellular location">
    <subcellularLocation>
        <location evidence="1">Plastid</location>
        <location evidence="1">Chloroplast thylakoid membrane</location>
        <topology evidence="1">Peripheral membrane protein</topology>
        <orientation evidence="1">Stromal side</orientation>
    </subcellularLocation>
</comment>
<organism>
    <name type="scientific">Pleurastrum terricola</name>
    <name type="common">Filamentous green alga</name>
    <name type="synonym">Leptosira terrestris</name>
    <dbReference type="NCBI Taxonomy" id="34116"/>
    <lineage>
        <taxon>Eukaryota</taxon>
        <taxon>Viridiplantae</taxon>
        <taxon>Chlorophyta</taxon>
        <taxon>core chlorophytes</taxon>
        <taxon>Chlorophyceae</taxon>
        <taxon>CS clade</taxon>
        <taxon>Chlamydomonadales</taxon>
        <taxon>Pleurastraceae</taxon>
        <taxon>Pleurastrum</taxon>
    </lineage>
</organism>
<geneLocation type="chloroplast"/>
<sequence length="81" mass="8804">MSHSVKIYDTCIGCTQCVRACPTDVLEMVPWDGCKASQIASAPRTEDCVGCKRCESACPTDFLSVRVYLGSETTRSMGLAY</sequence>
<feature type="chain" id="PRO_0000322044" description="Photosystem I iron-sulfur center">
    <location>
        <begin position="1"/>
        <end position="81"/>
    </location>
</feature>
<feature type="domain" description="4Fe-4S ferredoxin-type 1" evidence="1">
    <location>
        <begin position="2"/>
        <end position="31"/>
    </location>
</feature>
<feature type="domain" description="4Fe-4S ferredoxin-type 2" evidence="1">
    <location>
        <begin position="39"/>
        <end position="68"/>
    </location>
</feature>
<feature type="binding site" evidence="1">
    <location>
        <position position="11"/>
    </location>
    <ligand>
        <name>[4Fe-4S] cluster</name>
        <dbReference type="ChEBI" id="CHEBI:49883"/>
        <label>1</label>
    </ligand>
</feature>
<feature type="binding site" evidence="1">
    <location>
        <position position="14"/>
    </location>
    <ligand>
        <name>[4Fe-4S] cluster</name>
        <dbReference type="ChEBI" id="CHEBI:49883"/>
        <label>1</label>
    </ligand>
</feature>
<feature type="binding site" evidence="1">
    <location>
        <position position="17"/>
    </location>
    <ligand>
        <name>[4Fe-4S] cluster</name>
        <dbReference type="ChEBI" id="CHEBI:49883"/>
        <label>1</label>
    </ligand>
</feature>
<feature type="binding site" evidence="1">
    <location>
        <position position="21"/>
    </location>
    <ligand>
        <name>[4Fe-4S] cluster</name>
        <dbReference type="ChEBI" id="CHEBI:49883"/>
        <label>2</label>
    </ligand>
</feature>
<feature type="binding site" evidence="1">
    <location>
        <position position="48"/>
    </location>
    <ligand>
        <name>[4Fe-4S] cluster</name>
        <dbReference type="ChEBI" id="CHEBI:49883"/>
        <label>2</label>
    </ligand>
</feature>
<feature type="binding site" evidence="1">
    <location>
        <position position="51"/>
    </location>
    <ligand>
        <name>[4Fe-4S] cluster</name>
        <dbReference type="ChEBI" id="CHEBI:49883"/>
        <label>2</label>
    </ligand>
</feature>
<feature type="binding site" evidence="1">
    <location>
        <position position="54"/>
    </location>
    <ligand>
        <name>[4Fe-4S] cluster</name>
        <dbReference type="ChEBI" id="CHEBI:49883"/>
        <label>2</label>
    </ligand>
</feature>
<feature type="binding site" evidence="1">
    <location>
        <position position="58"/>
    </location>
    <ligand>
        <name>[4Fe-4S] cluster</name>
        <dbReference type="ChEBI" id="CHEBI:49883"/>
        <label>1</label>
    </ligand>
</feature>
<keyword id="KW-0004">4Fe-4S</keyword>
<keyword id="KW-0150">Chloroplast</keyword>
<keyword id="KW-0249">Electron transport</keyword>
<keyword id="KW-0408">Iron</keyword>
<keyword id="KW-0411">Iron-sulfur</keyword>
<keyword id="KW-0472">Membrane</keyword>
<keyword id="KW-0479">Metal-binding</keyword>
<keyword id="KW-0560">Oxidoreductase</keyword>
<keyword id="KW-0602">Photosynthesis</keyword>
<keyword id="KW-0603">Photosystem I</keyword>
<keyword id="KW-0934">Plastid</keyword>
<keyword id="KW-0677">Repeat</keyword>
<keyword id="KW-0793">Thylakoid</keyword>
<keyword id="KW-0813">Transport</keyword>
<accession>A6YGC0</accession>
<gene>
    <name evidence="1" type="primary">psaC</name>
</gene>
<proteinExistence type="inferred from homology"/>
<evidence type="ECO:0000255" key="1">
    <source>
        <dbReference type="HAMAP-Rule" id="MF_01303"/>
    </source>
</evidence>
<protein>
    <recommendedName>
        <fullName evidence="1">Photosystem I iron-sulfur center</fullName>
        <ecNumber evidence="1">1.97.1.12</ecNumber>
    </recommendedName>
    <alternativeName>
        <fullName evidence="1">9 kDa polypeptide</fullName>
    </alternativeName>
    <alternativeName>
        <fullName evidence="1">PSI-C</fullName>
    </alternativeName>
    <alternativeName>
        <fullName evidence="1">Photosystem I subunit VII</fullName>
    </alternativeName>
    <alternativeName>
        <fullName evidence="1">PsaC</fullName>
    </alternativeName>
</protein>